<proteinExistence type="inferred from homology"/>
<comment type="catalytic activity">
    <reaction evidence="1">
        <text>urea + 2 H2O + H(+) = hydrogencarbonate + 2 NH4(+)</text>
        <dbReference type="Rhea" id="RHEA:20557"/>
        <dbReference type="ChEBI" id="CHEBI:15377"/>
        <dbReference type="ChEBI" id="CHEBI:15378"/>
        <dbReference type="ChEBI" id="CHEBI:16199"/>
        <dbReference type="ChEBI" id="CHEBI:17544"/>
        <dbReference type="ChEBI" id="CHEBI:28938"/>
        <dbReference type="EC" id="3.5.1.5"/>
    </reaction>
</comment>
<comment type="pathway">
    <text evidence="1">Nitrogen metabolism; urea degradation; CO(2) and NH(3) from urea (urease route): step 1/1.</text>
</comment>
<comment type="subunit">
    <text evidence="1">Heterotrimer of UreA (gamma), UreB (beta) and UreC (alpha) subunits. Three heterotrimers associate to form the active enzyme.</text>
</comment>
<comment type="subcellular location">
    <subcellularLocation>
        <location evidence="1">Cytoplasm</location>
    </subcellularLocation>
</comment>
<comment type="similarity">
    <text evidence="1">Belongs to the urease beta subunit family.</text>
</comment>
<reference key="1">
    <citation type="journal article" date="2006" name="Genome Biol.">
        <title>The genome of Rhizobium leguminosarum has recognizable core and accessory components.</title>
        <authorList>
            <person name="Young J.P.W."/>
            <person name="Crossman L.C."/>
            <person name="Johnston A.W.B."/>
            <person name="Thomson N.R."/>
            <person name="Ghazoui Z.F."/>
            <person name="Hull K.H."/>
            <person name="Wexler M."/>
            <person name="Curson A.R.J."/>
            <person name="Todd J.D."/>
            <person name="Poole P.S."/>
            <person name="Mauchline T.H."/>
            <person name="East A.K."/>
            <person name="Quail M.A."/>
            <person name="Churcher C."/>
            <person name="Arrowsmith C."/>
            <person name="Cherevach I."/>
            <person name="Chillingworth T."/>
            <person name="Clarke K."/>
            <person name="Cronin A."/>
            <person name="Davis P."/>
            <person name="Fraser A."/>
            <person name="Hance Z."/>
            <person name="Hauser H."/>
            <person name="Jagels K."/>
            <person name="Moule S."/>
            <person name="Mungall K."/>
            <person name="Norbertczak H."/>
            <person name="Rabbinowitsch E."/>
            <person name="Sanders M."/>
            <person name="Simmonds M."/>
            <person name="Whitehead S."/>
            <person name="Parkhill J."/>
        </authorList>
    </citation>
    <scope>NUCLEOTIDE SEQUENCE [LARGE SCALE GENOMIC DNA]</scope>
    <source>
        <strain>DSM 114642 / LMG 32736 / 3841</strain>
    </source>
</reference>
<dbReference type="EC" id="3.5.1.5" evidence="1"/>
<dbReference type="EMBL" id="AM236080">
    <property type="protein sequence ID" value="CAK09224.1"/>
    <property type="molecule type" value="Genomic_DNA"/>
</dbReference>
<dbReference type="RefSeq" id="WP_011653188.1">
    <property type="nucleotide sequence ID" value="NC_008380.1"/>
</dbReference>
<dbReference type="SMR" id="Q1MCV6"/>
<dbReference type="EnsemblBacteria" id="CAK09224">
    <property type="protein sequence ID" value="CAK09224"/>
    <property type="gene ID" value="RL3734"/>
</dbReference>
<dbReference type="KEGG" id="rle:RL3734"/>
<dbReference type="eggNOG" id="COG0832">
    <property type="taxonomic scope" value="Bacteria"/>
</dbReference>
<dbReference type="HOGENOM" id="CLU_129707_1_1_5"/>
<dbReference type="UniPathway" id="UPA00258">
    <property type="reaction ID" value="UER00370"/>
</dbReference>
<dbReference type="Proteomes" id="UP000006575">
    <property type="component" value="Chromosome"/>
</dbReference>
<dbReference type="GO" id="GO:0035550">
    <property type="term" value="C:urease complex"/>
    <property type="evidence" value="ECO:0007669"/>
    <property type="project" value="InterPro"/>
</dbReference>
<dbReference type="GO" id="GO:0009039">
    <property type="term" value="F:urease activity"/>
    <property type="evidence" value="ECO:0007669"/>
    <property type="project" value="UniProtKB-UniRule"/>
</dbReference>
<dbReference type="GO" id="GO:0043419">
    <property type="term" value="P:urea catabolic process"/>
    <property type="evidence" value="ECO:0007669"/>
    <property type="project" value="UniProtKB-UniRule"/>
</dbReference>
<dbReference type="CDD" id="cd00407">
    <property type="entry name" value="Urease_beta"/>
    <property type="match status" value="1"/>
</dbReference>
<dbReference type="FunFam" id="2.10.150.10:FF:000001">
    <property type="entry name" value="Urease subunit beta"/>
    <property type="match status" value="1"/>
</dbReference>
<dbReference type="Gene3D" id="2.10.150.10">
    <property type="entry name" value="Urease, beta subunit"/>
    <property type="match status" value="1"/>
</dbReference>
<dbReference type="HAMAP" id="MF_01954">
    <property type="entry name" value="Urease_beta"/>
    <property type="match status" value="1"/>
</dbReference>
<dbReference type="InterPro" id="IPR002019">
    <property type="entry name" value="Urease_beta-like"/>
</dbReference>
<dbReference type="InterPro" id="IPR036461">
    <property type="entry name" value="Urease_betasu_sf"/>
</dbReference>
<dbReference type="InterPro" id="IPR050069">
    <property type="entry name" value="Urease_subunit"/>
</dbReference>
<dbReference type="NCBIfam" id="NF009682">
    <property type="entry name" value="PRK13203.1"/>
    <property type="match status" value="1"/>
</dbReference>
<dbReference type="NCBIfam" id="TIGR00192">
    <property type="entry name" value="urease_beta"/>
    <property type="match status" value="1"/>
</dbReference>
<dbReference type="PANTHER" id="PTHR33569">
    <property type="entry name" value="UREASE"/>
    <property type="match status" value="1"/>
</dbReference>
<dbReference type="PANTHER" id="PTHR33569:SF1">
    <property type="entry name" value="UREASE"/>
    <property type="match status" value="1"/>
</dbReference>
<dbReference type="Pfam" id="PF00699">
    <property type="entry name" value="Urease_beta"/>
    <property type="match status" value="1"/>
</dbReference>
<dbReference type="SUPFAM" id="SSF51278">
    <property type="entry name" value="Urease, beta-subunit"/>
    <property type="match status" value="1"/>
</dbReference>
<protein>
    <recommendedName>
        <fullName evidence="1">Urease subunit beta</fullName>
        <ecNumber evidence="1">3.5.1.5</ecNumber>
    </recommendedName>
    <alternativeName>
        <fullName evidence="1">Urea amidohydrolase subunit beta</fullName>
    </alternativeName>
</protein>
<organism>
    <name type="scientific">Rhizobium johnstonii (strain DSM 114642 / LMG 32736 / 3841)</name>
    <name type="common">Rhizobium leguminosarum bv. viciae</name>
    <dbReference type="NCBI Taxonomy" id="216596"/>
    <lineage>
        <taxon>Bacteria</taxon>
        <taxon>Pseudomonadati</taxon>
        <taxon>Pseudomonadota</taxon>
        <taxon>Alphaproteobacteria</taxon>
        <taxon>Hyphomicrobiales</taxon>
        <taxon>Rhizobiaceae</taxon>
        <taxon>Rhizobium/Agrobacterium group</taxon>
        <taxon>Rhizobium</taxon>
        <taxon>Rhizobium johnstonii</taxon>
    </lineage>
</organism>
<sequence length="101" mass="10750">MIPGEIIAASGDIELNAGAPTVTLEVSNTGDRPVQVGSHYHFAETNAGLSFDRAVARGKRLDIPAGTAVRFEPGQTRSVTLIPLSGKREVYGFRQLVMGKL</sequence>
<accession>Q1MCV6</accession>
<name>URE2_RHIJ3</name>
<keyword id="KW-0963">Cytoplasm</keyword>
<keyword id="KW-0378">Hydrolase</keyword>
<feature type="chain" id="PRO_1000070766" description="Urease subunit beta">
    <location>
        <begin position="1"/>
        <end position="101"/>
    </location>
</feature>
<gene>
    <name evidence="1" type="primary">ureB</name>
    <name type="ordered locus">RL3734</name>
</gene>
<evidence type="ECO:0000255" key="1">
    <source>
        <dbReference type="HAMAP-Rule" id="MF_01954"/>
    </source>
</evidence>